<comment type="function">
    <text evidence="1">This protein binds to the 23S rRNA, and is important in its secondary structure. It is located near the subunit interface in the base of the L7/L12 stalk, and near the tRNA binding site of the peptidyltransferase center.</text>
</comment>
<comment type="subunit">
    <text evidence="1">Part of the 50S ribosomal subunit.</text>
</comment>
<comment type="similarity">
    <text evidence="1">Belongs to the universal ribosomal protein uL6 family.</text>
</comment>
<accession>B3PMN2</accession>
<feature type="chain" id="PRO_1000144018" description="Large ribosomal subunit protein uL6">
    <location>
        <begin position="1"/>
        <end position="179"/>
    </location>
</feature>
<sequence>MSRIGNRILKVPANTEVVIENNHITVKGKLGELHYSFSSLIKVNLENGEITTVRSNEEKTTKQLHGTTNAIIKNMLIGVSEGYKKEIEIKGVGYKATLKGNEIEVIAGYSHPVTLALPSNLKVELPKPTNIIISGIDKQAVGEFAANLRKIRKPSPYSGKGIMYKDEQIRRKEGKTASK</sequence>
<proteinExistence type="inferred from homology"/>
<gene>
    <name evidence="1" type="primary">rplF</name>
    <name type="ordered locus">MARTH_orf426</name>
</gene>
<evidence type="ECO:0000255" key="1">
    <source>
        <dbReference type="HAMAP-Rule" id="MF_01365"/>
    </source>
</evidence>
<evidence type="ECO:0000305" key="2"/>
<name>RL6_META1</name>
<organism>
    <name type="scientific">Metamycoplasma arthritidis (strain 158L3-1)</name>
    <name type="common">Mycoplasma arthritidis</name>
    <dbReference type="NCBI Taxonomy" id="243272"/>
    <lineage>
        <taxon>Bacteria</taxon>
        <taxon>Bacillati</taxon>
        <taxon>Mycoplasmatota</taxon>
        <taxon>Mycoplasmoidales</taxon>
        <taxon>Metamycoplasmataceae</taxon>
        <taxon>Metamycoplasma</taxon>
    </lineage>
</organism>
<keyword id="KW-1185">Reference proteome</keyword>
<keyword id="KW-0687">Ribonucleoprotein</keyword>
<keyword id="KW-0689">Ribosomal protein</keyword>
<keyword id="KW-0694">RNA-binding</keyword>
<keyword id="KW-0699">rRNA-binding</keyword>
<dbReference type="EMBL" id="CP001047">
    <property type="protein sequence ID" value="ACF07284.1"/>
    <property type="molecule type" value="Genomic_DNA"/>
</dbReference>
<dbReference type="RefSeq" id="WP_012498241.1">
    <property type="nucleotide sequence ID" value="NC_011025.1"/>
</dbReference>
<dbReference type="SMR" id="B3PMN2"/>
<dbReference type="STRING" id="243272.MARTH_orf426"/>
<dbReference type="KEGG" id="mat:MARTH_orf426"/>
<dbReference type="eggNOG" id="COG0097">
    <property type="taxonomic scope" value="Bacteria"/>
</dbReference>
<dbReference type="HOGENOM" id="CLU_065464_1_2_14"/>
<dbReference type="Proteomes" id="UP000008812">
    <property type="component" value="Chromosome"/>
</dbReference>
<dbReference type="GO" id="GO:1990904">
    <property type="term" value="C:ribonucleoprotein complex"/>
    <property type="evidence" value="ECO:0007669"/>
    <property type="project" value="UniProtKB-KW"/>
</dbReference>
<dbReference type="GO" id="GO:0005840">
    <property type="term" value="C:ribosome"/>
    <property type="evidence" value="ECO:0007669"/>
    <property type="project" value="UniProtKB-KW"/>
</dbReference>
<dbReference type="GO" id="GO:0019843">
    <property type="term" value="F:rRNA binding"/>
    <property type="evidence" value="ECO:0007669"/>
    <property type="project" value="UniProtKB-UniRule"/>
</dbReference>
<dbReference type="GO" id="GO:0003735">
    <property type="term" value="F:structural constituent of ribosome"/>
    <property type="evidence" value="ECO:0007669"/>
    <property type="project" value="InterPro"/>
</dbReference>
<dbReference type="GO" id="GO:0002181">
    <property type="term" value="P:cytoplasmic translation"/>
    <property type="evidence" value="ECO:0007669"/>
    <property type="project" value="TreeGrafter"/>
</dbReference>
<dbReference type="FunFam" id="3.90.930.12:FF:000001">
    <property type="entry name" value="50S ribosomal protein L6"/>
    <property type="match status" value="1"/>
</dbReference>
<dbReference type="Gene3D" id="3.90.930.12">
    <property type="entry name" value="Ribosomal protein L6, alpha-beta domain"/>
    <property type="match status" value="2"/>
</dbReference>
<dbReference type="HAMAP" id="MF_01365_B">
    <property type="entry name" value="Ribosomal_uL6_B"/>
    <property type="match status" value="1"/>
</dbReference>
<dbReference type="InterPro" id="IPR000702">
    <property type="entry name" value="Ribosomal_uL6-like"/>
</dbReference>
<dbReference type="InterPro" id="IPR036789">
    <property type="entry name" value="Ribosomal_uL6-like_a/b-dom_sf"/>
</dbReference>
<dbReference type="InterPro" id="IPR020040">
    <property type="entry name" value="Ribosomal_uL6_a/b-dom"/>
</dbReference>
<dbReference type="InterPro" id="IPR019906">
    <property type="entry name" value="Ribosomal_uL6_bac-type"/>
</dbReference>
<dbReference type="NCBIfam" id="TIGR03654">
    <property type="entry name" value="L6_bact"/>
    <property type="match status" value="1"/>
</dbReference>
<dbReference type="PANTHER" id="PTHR11655">
    <property type="entry name" value="60S/50S RIBOSOMAL PROTEIN L6/L9"/>
    <property type="match status" value="1"/>
</dbReference>
<dbReference type="PANTHER" id="PTHR11655:SF14">
    <property type="entry name" value="LARGE RIBOSOMAL SUBUNIT PROTEIN UL6M"/>
    <property type="match status" value="1"/>
</dbReference>
<dbReference type="Pfam" id="PF00347">
    <property type="entry name" value="Ribosomal_L6"/>
    <property type="match status" value="2"/>
</dbReference>
<dbReference type="PIRSF" id="PIRSF002162">
    <property type="entry name" value="Ribosomal_L6"/>
    <property type="match status" value="1"/>
</dbReference>
<dbReference type="PRINTS" id="PR00059">
    <property type="entry name" value="RIBOSOMALL6"/>
</dbReference>
<dbReference type="SUPFAM" id="SSF56053">
    <property type="entry name" value="Ribosomal protein L6"/>
    <property type="match status" value="2"/>
</dbReference>
<protein>
    <recommendedName>
        <fullName evidence="1">Large ribosomal subunit protein uL6</fullName>
    </recommendedName>
    <alternativeName>
        <fullName evidence="2">50S ribosomal protein L6</fullName>
    </alternativeName>
</protein>
<reference key="1">
    <citation type="journal article" date="2008" name="Infect. Immun.">
        <title>Genome of Mycoplasma arthritidis.</title>
        <authorList>
            <person name="Dybvig K."/>
            <person name="Zuhua C."/>
            <person name="Lao P."/>
            <person name="Jordan D.S."/>
            <person name="French C.T."/>
            <person name="Tu A.H."/>
            <person name="Loraine A.E."/>
        </authorList>
    </citation>
    <scope>NUCLEOTIDE SEQUENCE [LARGE SCALE GENOMIC DNA]</scope>
    <source>
        <strain>158L3-1</strain>
    </source>
</reference>